<name>PG082_MONPV</name>
<evidence type="ECO:0000250" key="1">
    <source>
        <dbReference type="UniProtKB" id="P68462"/>
    </source>
</evidence>
<evidence type="ECO:0000305" key="2"/>
<evidence type="ECO:0000312" key="3">
    <source>
        <dbReference type="EMBL" id="AGF36971.1"/>
    </source>
</evidence>
<reference key="1">
    <citation type="journal article" date="2013" name="Am. J. Trop. Med. Hyg.">
        <title>Detection of human monkeypox in the republic of the congo following intensive community education.</title>
        <authorList>
            <person name="Reynolds M.G."/>
            <person name="Emerson G.L."/>
            <person name="Pukuta E."/>
            <person name="Karhemere S."/>
            <person name="Muyembe J.J."/>
            <person name="Bikindou A."/>
            <person name="McCollum A.M."/>
            <person name="Moses C."/>
            <person name="Wilkins K."/>
            <person name="Zhao H."/>
            <person name="Damon I.K."/>
            <person name="Karem K.L."/>
            <person name="Li Y."/>
            <person name="Carroll D.S."/>
            <person name="Mombouli J.V."/>
        </authorList>
    </citation>
    <scope>NUCLEOTIDE SEQUENCE</scope>
    <source>
        <strain>ROC2010</strain>
    </source>
</reference>
<reference key="2">
    <citation type="journal article" date="2022" name="J. Infect. Dis.">
        <title>Exportation of Monkeypox virus from the African continent.</title>
        <authorList>
            <person name="Mauldin M.R."/>
            <person name="McCollum A.M."/>
            <person name="Nakazawa Y.J."/>
            <person name="Mandra A."/>
            <person name="Whitehouse E.R."/>
            <person name="Davidson W."/>
            <person name="Zhao H."/>
            <person name="Gao J."/>
            <person name="Li Y."/>
            <person name="Doty J."/>
            <person name="Yinka-Ogunleye A."/>
            <person name="Akinpelu A."/>
            <person name="Aruna O."/>
            <person name="Naidoo D."/>
            <person name="Lewandowski K."/>
            <person name="Afrough B."/>
            <person name="Graham V."/>
            <person name="Aarons E."/>
            <person name="Hewson R."/>
            <person name="Vipond R."/>
            <person name="Dunning J."/>
            <person name="Chand M."/>
            <person name="Brown C."/>
            <person name="Cohen-Gihon I."/>
            <person name="Erez N."/>
            <person name="Shifman O."/>
            <person name="Israeli O."/>
            <person name="Sharon M."/>
            <person name="Schwartz E."/>
            <person name="Beth-Din A."/>
            <person name="Zvi A."/>
            <person name="Mak T.M."/>
            <person name="Ng Y.K."/>
            <person name="Cui L."/>
            <person name="Lin R.T.P."/>
            <person name="Olson V.A."/>
            <person name="Brooks T."/>
            <person name="Paran N."/>
            <person name="Ihekweazu C."/>
            <person name="Reynolds M.G."/>
        </authorList>
    </citation>
    <scope>NUCLEOTIDE SEQUENCE [LARGE SCALE GENOMIC DNA]</scope>
    <source>
        <strain>MPXV-M5312_HM12_Rivers</strain>
    </source>
</reference>
<feature type="chain" id="PRO_0000457689" description="Telomere-binding protein OPG082">
    <location>
        <begin position="1"/>
        <end position="382"/>
    </location>
</feature>
<organism evidence="3">
    <name type="scientific">Monkeypox virus</name>
    <dbReference type="NCBI Taxonomy" id="10244"/>
    <lineage>
        <taxon>Viruses</taxon>
        <taxon>Varidnaviria</taxon>
        <taxon>Bamfordvirae</taxon>
        <taxon>Nucleocytoviricota</taxon>
        <taxon>Pokkesviricetes</taxon>
        <taxon>Chitovirales</taxon>
        <taxon>Poxviridae</taxon>
        <taxon>Chordopoxvirinae</taxon>
        <taxon>Orthopoxvirus</taxon>
    </lineage>
</organism>
<protein>
    <recommendedName>
        <fullName>Telomere-binding protein OPG082</fullName>
    </recommendedName>
</protein>
<comment type="function">
    <text evidence="1">Binds to the hairpin form of the viral telomeric sequence. Might direct genome encapsidation into the virus particle.</text>
</comment>
<comment type="subcellular location">
    <subcellularLocation>
        <location evidence="1">Virion</location>
    </subcellularLocation>
    <text evidence="1">Present in the virus core.</text>
</comment>
<comment type="induction">
    <text evidence="1">Expressed in the intermediate phase of the viral replicative cycle.</text>
</comment>
<comment type="similarity">
    <text evidence="2">Belongs to the orthopoxvirus OPG082 family.</text>
</comment>
<organismHost>
    <name type="scientific">Cynomys gunnisoni</name>
    <name type="common">Gunnison's prairie dog</name>
    <name type="synonym">Spermophilus gunnisoni</name>
    <dbReference type="NCBI Taxonomy" id="45479"/>
</organismHost>
<organismHost>
    <name type="scientific">Cynomys leucurus</name>
    <name type="common">White-tailed prairie dog</name>
    <dbReference type="NCBI Taxonomy" id="99825"/>
</organismHost>
<organismHost>
    <name type="scientific">Cynomys ludovicianus</name>
    <name type="common">Black-tailed prairie dog</name>
    <dbReference type="NCBI Taxonomy" id="45480"/>
</organismHost>
<organismHost>
    <name type="scientific">Cynomys mexicanus</name>
    <name type="common">Mexican prairie dog</name>
    <dbReference type="NCBI Taxonomy" id="99826"/>
</organismHost>
<organismHost>
    <name type="scientific">Cynomys parvidens</name>
    <name type="common">Utah prairie dog</name>
    <dbReference type="NCBI Taxonomy" id="99827"/>
</organismHost>
<organismHost>
    <name type="scientific">Gliridae</name>
    <name type="common">dormice</name>
    <dbReference type="NCBI Taxonomy" id="30650"/>
</organismHost>
<organismHost>
    <name type="scientific">Heliosciurus ruwenzorii</name>
    <name type="common">Ruwenzori sun squirrel</name>
    <dbReference type="NCBI Taxonomy" id="226685"/>
</organismHost>
<organismHost>
    <name type="scientific">Homo sapiens</name>
    <name type="common">Human</name>
    <dbReference type="NCBI Taxonomy" id="9606"/>
</organismHost>
<organismHost>
    <name type="scientific">Mus musculus</name>
    <name type="common">Mouse</name>
    <dbReference type="NCBI Taxonomy" id="10090"/>
</organismHost>
<gene>
    <name type="primary">OPG082</name>
    <name type="ORF">MPXVgp067</name>
</gene>
<sequence>MNNFVKQVASKSLKPTKKLSPLDEVISLNECIISFNLDNFYYCNDGLFTKPINTPEDVLKSLLIMESFAYEKMIIKGLIKILISRAYINDIYFTPFGWLTGVDDDPETHVVIKIIFNSSLISIKSQVIEYLKPYNVNNLSVLTTEKELSINTFNVPDSIPISIISFFPFDTDFILVILFFGVYNDSYCGISYISPKERLPYIIEILKPLVLEINMLSDEIGRTSSIRIFNSTSVKKFPTNTLTSICEIVYSFDESSFTTPKTFTPLNASPYIPKKIVSLLDLPSNVEIKAISRSGVDFITHINNKRLTTILVIAKDNFLKNSTFSGTFIKENIIWKGIYTYRIIKSSFPVPTIKSVTNKKKICKKHCFVNSQYTTRTLSHIL</sequence>
<dbReference type="EMBL" id="KC257461">
    <property type="protein sequence ID" value="AGF36971.1"/>
    <property type="molecule type" value="Genomic_DNA"/>
</dbReference>
<dbReference type="EMBL" id="MT903340">
    <property type="protein sequence ID" value="QNP12937.1"/>
    <property type="molecule type" value="Genomic_DNA"/>
</dbReference>
<dbReference type="RefSeq" id="YP_010377064.1">
    <property type="nucleotide sequence ID" value="NC_063383.1"/>
</dbReference>
<dbReference type="GeneID" id="72551477"/>
<dbReference type="Proteomes" id="UP000516359">
    <property type="component" value="Genome"/>
</dbReference>
<dbReference type="GO" id="GO:0044423">
    <property type="term" value="C:virion component"/>
    <property type="evidence" value="ECO:0007669"/>
    <property type="project" value="UniProtKB-KW"/>
</dbReference>
<dbReference type="GO" id="GO:0003677">
    <property type="term" value="F:DNA binding"/>
    <property type="evidence" value="ECO:0007669"/>
    <property type="project" value="UniProtKB-KW"/>
</dbReference>
<dbReference type="GO" id="GO:0016032">
    <property type="term" value="P:viral process"/>
    <property type="evidence" value="ECO:0007669"/>
    <property type="project" value="InterPro"/>
</dbReference>
<dbReference type="InterPro" id="IPR007674">
    <property type="entry name" value="Poxvirus_F5/I6_dom"/>
</dbReference>
<dbReference type="InterPro" id="IPR022219">
    <property type="entry name" value="Poxvirus_I6_C"/>
</dbReference>
<dbReference type="Pfam" id="PF04595">
    <property type="entry name" value="Pox_I6"/>
    <property type="match status" value="1"/>
</dbReference>
<dbReference type="Pfam" id="PF12562">
    <property type="entry name" value="Pox_I6_C"/>
    <property type="match status" value="1"/>
</dbReference>
<proteinExistence type="inferred from homology"/>
<keyword id="KW-0238">DNA-binding</keyword>
<keyword id="KW-1185">Reference proteome</keyword>
<keyword id="KW-0946">Virion</keyword>
<accession>M1L9M0</accession>